<sequence length="197" mass="21628">MFGCLVAGRLVQTAAQQVAEDKFVFDLPDYESINHVVVFMLGTIPFPEGMGGSVYFSYPDSNGMPVWQLLGFVTNGKPSAIFKISGLKSGEGSQHPFGAMNIVRTPSVAQIGISVELLDSMAQQTPVGNAAVSSVDSFTQFTQKMLDNFYNFASSFAVSQAQMTPSPSEMFIPANVVLKWYENFQRRLAQNPLFWKT</sequence>
<accession>Q53FT3</accession>
<accession>Q8WVE8</accession>
<accession>Q9NVQ2</accession>
<accession>Q9NZZ1</accession>
<accession>Q9P022</accession>
<accession>Q9P0N1</accession>
<comment type="function">
    <text evidence="3">Acts as a specific nuclear import carrier for HSP70 proteins following heat-shock stress: acts by mediating the nucleoporin-dependent translocation of ATP-bound HSP70 proteins into the nucleus. HSP70 proteins import is required to protect cells from heat shock damages. Does not translocate ADP-bound HSP70 proteins into the nucleus.</text>
</comment>
<comment type="subunit">
    <text evidence="3 4">Forms an asymmetric homodimer; required for binding and nuclear import of HSP70 proteins (PubMed:25760597). Interacts with ATP-bound HSP70 proteins (PubMed:22541429). Interacts with NUP62 and NUP153 (via F-X-F-G repeats) (PubMed:22541429). Interacts with HSPA8 (PubMed:25760597).</text>
</comment>
<comment type="interaction">
    <interactant intactId="EBI-6137602">
        <id>Q53FT3</id>
    </interactant>
    <interactant intactId="EBI-11961672">
        <id>O94929-2</id>
        <label>ABLIM3</label>
    </interactant>
    <organismsDiffer>false</organismsDiffer>
    <experiments>3</experiments>
</comment>
<comment type="interaction">
    <interactant intactId="EBI-6137602">
        <id>Q53FT3</id>
    </interactant>
    <interactant intactId="EBI-9087860">
        <id>P32243-2</id>
        <label>OTX2</label>
    </interactant>
    <organismsDiffer>false</organismsDiffer>
    <experiments>3</experiments>
</comment>
<comment type="subcellular location">
    <subcellularLocation>
        <location evidence="1">Cytoplasm</location>
    </subcellularLocation>
    <subcellularLocation>
        <location evidence="3">Cytoplasm</location>
        <location evidence="3">Cytosol</location>
    </subcellularLocation>
    <subcellularLocation>
        <location evidence="3">Nucleus</location>
    </subcellularLocation>
</comment>
<comment type="induction">
    <text evidence="3">Following heat-shock treatment.</text>
</comment>
<comment type="disease" evidence="5">
    <disease id="DI-04695">
        <name>Leukodystrophy, hypomyelinating, 13</name>
        <acronym>HLD13</acronym>
        <description>An autosomal recessive neurodegenerative disorder with infantile onset, affecting mainly the central white matter. Clinical features include early feeding difficulties, global developmental delay, postnatal progressive microcephaly, truncal hypotonia, spasticity, and variable neurologic deficits, such as visual impairment.</description>
        <dbReference type="MIM" id="616881"/>
    </disease>
    <text>The disease is caused by variants affecting the gene represented in this entry.</text>
</comment>
<comment type="miscellaneous">
    <text evidence="7">'Hikeshi' is a traditional Japanese compound word used for a firefighter, smokejumper, or troubleshooter.</text>
</comment>
<comment type="similarity">
    <text evidence="6">Belongs to the OPI10 family.</text>
</comment>
<comment type="sequence caution" evidence="6">
    <conflict type="frameshift">
        <sequence resource="EMBL-CDS" id="AAF29102"/>
    </conflict>
</comment>
<comment type="sequence caution" evidence="6">
    <conflict type="frameshift">
        <sequence resource="EMBL-CDS" id="AAF29142"/>
    </conflict>
</comment>
<comment type="sequence caution" evidence="6">
    <conflict type="frameshift">
        <sequence resource="EMBL-CDS" id="AAF36168"/>
    </conflict>
</comment>
<organism>
    <name type="scientific">Homo sapiens</name>
    <name type="common">Human</name>
    <dbReference type="NCBI Taxonomy" id="9606"/>
    <lineage>
        <taxon>Eukaryota</taxon>
        <taxon>Metazoa</taxon>
        <taxon>Chordata</taxon>
        <taxon>Craniata</taxon>
        <taxon>Vertebrata</taxon>
        <taxon>Euteleostomi</taxon>
        <taxon>Mammalia</taxon>
        <taxon>Eutheria</taxon>
        <taxon>Euarchontoglires</taxon>
        <taxon>Primates</taxon>
        <taxon>Haplorrhini</taxon>
        <taxon>Catarrhini</taxon>
        <taxon>Hominidae</taxon>
        <taxon>Homo</taxon>
    </lineage>
</organism>
<proteinExistence type="evidence at protein level"/>
<keyword id="KW-0002">3D-structure</keyword>
<keyword id="KW-0963">Cytoplasm</keyword>
<keyword id="KW-0225">Disease variant</keyword>
<keyword id="KW-1026">Leukodystrophy</keyword>
<keyword id="KW-0539">Nucleus</keyword>
<keyword id="KW-0653">Protein transport</keyword>
<keyword id="KW-1267">Proteomics identification</keyword>
<keyword id="KW-1185">Reference proteome</keyword>
<keyword id="KW-0813">Transport</keyword>
<evidence type="ECO:0000250" key="1">
    <source>
        <dbReference type="UniProtKB" id="Q9DD02"/>
    </source>
</evidence>
<evidence type="ECO:0000269" key="2">
    <source>
    </source>
</evidence>
<evidence type="ECO:0000269" key="3">
    <source>
    </source>
</evidence>
<evidence type="ECO:0000269" key="4">
    <source>
    </source>
</evidence>
<evidence type="ECO:0000269" key="5">
    <source>
    </source>
</evidence>
<evidence type="ECO:0000305" key="6"/>
<evidence type="ECO:0000305" key="7">
    <source>
    </source>
</evidence>
<evidence type="ECO:0000312" key="8">
    <source>
        <dbReference type="HGNC" id="HGNC:26938"/>
    </source>
</evidence>
<evidence type="ECO:0007744" key="9">
    <source>
        <dbReference type="PDB" id="3WVZ"/>
    </source>
</evidence>
<evidence type="ECO:0007744" key="10">
    <source>
        <dbReference type="PDB" id="3WW0"/>
    </source>
</evidence>
<evidence type="ECO:0007829" key="11">
    <source>
        <dbReference type="PDB" id="3WVZ"/>
    </source>
</evidence>
<evidence type="ECO:0007829" key="12">
    <source>
        <dbReference type="PDB" id="3WW0"/>
    </source>
</evidence>
<name>HIKES_HUMAN</name>
<gene>
    <name evidence="8" type="primary">HIKESHI</name>
    <name type="synonym">C11orf73</name>
    <name type="ORF">HSPC138</name>
    <name type="ORF">HSPC179</name>
    <name type="ORF">HSPC248</name>
</gene>
<reference key="1">
    <citation type="journal article" date="2000" name="Genome Res.">
        <title>Cloning and functional analysis of cDNAs with open reading frames for 300 previously undefined genes expressed in CD34+ hematopoietic stem/progenitor cells.</title>
        <authorList>
            <person name="Zhang Q.-H."/>
            <person name="Ye M."/>
            <person name="Wu X.-Y."/>
            <person name="Ren S.-X."/>
            <person name="Zhao M."/>
            <person name="Zhao C.-J."/>
            <person name="Fu G."/>
            <person name="Shen Y."/>
            <person name="Fan H.-Y."/>
            <person name="Lu G."/>
            <person name="Zhong M."/>
            <person name="Xu X.-R."/>
            <person name="Han Z.-G."/>
            <person name="Zhang J.-W."/>
            <person name="Tao J."/>
            <person name="Huang Q.-H."/>
            <person name="Zhou J."/>
            <person name="Hu G.-X."/>
            <person name="Gu J."/>
            <person name="Chen S.-J."/>
            <person name="Chen Z."/>
        </authorList>
    </citation>
    <scope>NUCLEOTIDE SEQUENCE [LARGE SCALE MRNA]</scope>
    <source>
        <tissue>Umbilical cord blood</tissue>
    </source>
</reference>
<reference key="2">
    <citation type="journal article" date="2004" name="Nat. Genet.">
        <title>Complete sequencing and characterization of 21,243 full-length human cDNAs.</title>
        <authorList>
            <person name="Ota T."/>
            <person name="Suzuki Y."/>
            <person name="Nishikawa T."/>
            <person name="Otsuki T."/>
            <person name="Sugiyama T."/>
            <person name="Irie R."/>
            <person name="Wakamatsu A."/>
            <person name="Hayashi K."/>
            <person name="Sato H."/>
            <person name="Nagai K."/>
            <person name="Kimura K."/>
            <person name="Makita H."/>
            <person name="Sekine M."/>
            <person name="Obayashi M."/>
            <person name="Nishi T."/>
            <person name="Shibahara T."/>
            <person name="Tanaka T."/>
            <person name="Ishii S."/>
            <person name="Yamamoto J."/>
            <person name="Saito K."/>
            <person name="Kawai Y."/>
            <person name="Isono Y."/>
            <person name="Nakamura Y."/>
            <person name="Nagahari K."/>
            <person name="Murakami K."/>
            <person name="Yasuda T."/>
            <person name="Iwayanagi T."/>
            <person name="Wagatsuma M."/>
            <person name="Shiratori A."/>
            <person name="Sudo H."/>
            <person name="Hosoiri T."/>
            <person name="Kaku Y."/>
            <person name="Kodaira H."/>
            <person name="Kondo H."/>
            <person name="Sugawara M."/>
            <person name="Takahashi M."/>
            <person name="Kanda K."/>
            <person name="Yokoi T."/>
            <person name="Furuya T."/>
            <person name="Kikkawa E."/>
            <person name="Omura Y."/>
            <person name="Abe K."/>
            <person name="Kamihara K."/>
            <person name="Katsuta N."/>
            <person name="Sato K."/>
            <person name="Tanikawa M."/>
            <person name="Yamazaki M."/>
            <person name="Ninomiya K."/>
            <person name="Ishibashi T."/>
            <person name="Yamashita H."/>
            <person name="Murakawa K."/>
            <person name="Fujimori K."/>
            <person name="Tanai H."/>
            <person name="Kimata M."/>
            <person name="Watanabe M."/>
            <person name="Hiraoka S."/>
            <person name="Chiba Y."/>
            <person name="Ishida S."/>
            <person name="Ono Y."/>
            <person name="Takiguchi S."/>
            <person name="Watanabe S."/>
            <person name="Yosida M."/>
            <person name="Hotuta T."/>
            <person name="Kusano J."/>
            <person name="Kanehori K."/>
            <person name="Takahashi-Fujii A."/>
            <person name="Hara H."/>
            <person name="Tanase T.-O."/>
            <person name="Nomura Y."/>
            <person name="Togiya S."/>
            <person name="Komai F."/>
            <person name="Hara R."/>
            <person name="Takeuchi K."/>
            <person name="Arita M."/>
            <person name="Imose N."/>
            <person name="Musashino K."/>
            <person name="Yuuki H."/>
            <person name="Oshima A."/>
            <person name="Sasaki N."/>
            <person name="Aotsuka S."/>
            <person name="Yoshikawa Y."/>
            <person name="Matsunawa H."/>
            <person name="Ichihara T."/>
            <person name="Shiohata N."/>
            <person name="Sano S."/>
            <person name="Moriya S."/>
            <person name="Momiyama H."/>
            <person name="Satoh N."/>
            <person name="Takami S."/>
            <person name="Terashima Y."/>
            <person name="Suzuki O."/>
            <person name="Nakagawa S."/>
            <person name="Senoh A."/>
            <person name="Mizoguchi H."/>
            <person name="Goto Y."/>
            <person name="Shimizu F."/>
            <person name="Wakebe H."/>
            <person name="Hishigaki H."/>
            <person name="Watanabe T."/>
            <person name="Sugiyama A."/>
            <person name="Takemoto M."/>
            <person name="Kawakami B."/>
            <person name="Yamazaki M."/>
            <person name="Watanabe K."/>
            <person name="Kumagai A."/>
            <person name="Itakura S."/>
            <person name="Fukuzumi Y."/>
            <person name="Fujimori Y."/>
            <person name="Komiyama M."/>
            <person name="Tashiro H."/>
            <person name="Tanigami A."/>
            <person name="Fujiwara T."/>
            <person name="Ono T."/>
            <person name="Yamada K."/>
            <person name="Fujii Y."/>
            <person name="Ozaki K."/>
            <person name="Hirao M."/>
            <person name="Ohmori Y."/>
            <person name="Kawabata A."/>
            <person name="Hikiji T."/>
            <person name="Kobatake N."/>
            <person name="Inagaki H."/>
            <person name="Ikema Y."/>
            <person name="Okamoto S."/>
            <person name="Okitani R."/>
            <person name="Kawakami T."/>
            <person name="Noguchi S."/>
            <person name="Itoh T."/>
            <person name="Shigeta K."/>
            <person name="Senba T."/>
            <person name="Matsumura K."/>
            <person name="Nakajima Y."/>
            <person name="Mizuno T."/>
            <person name="Morinaga M."/>
            <person name="Sasaki M."/>
            <person name="Togashi T."/>
            <person name="Oyama M."/>
            <person name="Hata H."/>
            <person name="Watanabe M."/>
            <person name="Komatsu T."/>
            <person name="Mizushima-Sugano J."/>
            <person name="Satoh T."/>
            <person name="Shirai Y."/>
            <person name="Takahashi Y."/>
            <person name="Nakagawa K."/>
            <person name="Okumura K."/>
            <person name="Nagase T."/>
            <person name="Nomura N."/>
            <person name="Kikuchi H."/>
            <person name="Masuho Y."/>
            <person name="Yamashita R."/>
            <person name="Nakai K."/>
            <person name="Yada T."/>
            <person name="Nakamura Y."/>
            <person name="Ohara O."/>
            <person name="Isogai T."/>
            <person name="Sugano S."/>
        </authorList>
    </citation>
    <scope>NUCLEOTIDE SEQUENCE [LARGE SCALE MRNA]</scope>
    <source>
        <tissue>Teratocarcinoma</tissue>
    </source>
</reference>
<reference key="3">
    <citation type="submission" date="2005-04" db="EMBL/GenBank/DDBJ databases">
        <authorList>
            <person name="Suzuki Y."/>
            <person name="Sugano S."/>
            <person name="Totoki Y."/>
            <person name="Toyoda A."/>
            <person name="Takeda T."/>
            <person name="Sakaki Y."/>
            <person name="Tanaka A."/>
            <person name="Yokoyama S."/>
        </authorList>
    </citation>
    <scope>NUCLEOTIDE SEQUENCE [LARGE SCALE MRNA]</scope>
    <source>
        <tissue>Kidney proximal tubule</tissue>
    </source>
</reference>
<reference key="4">
    <citation type="journal article" date="2004" name="Genome Res.">
        <title>The status, quality, and expansion of the NIH full-length cDNA project: the Mammalian Gene Collection (MGC).</title>
        <authorList>
            <consortium name="The MGC Project Team"/>
        </authorList>
    </citation>
    <scope>NUCLEOTIDE SEQUENCE [LARGE SCALE MRNA]</scope>
    <scope>VARIANT ALA-47</scope>
    <source>
        <tissue>Brain</tissue>
        <tissue>Lung</tissue>
    </source>
</reference>
<reference key="5">
    <citation type="journal article" date="2011" name="BMC Syst. Biol.">
        <title>Initial characterization of the human central proteome.</title>
        <authorList>
            <person name="Burkard T.R."/>
            <person name="Planyavsky M."/>
            <person name="Kaupe I."/>
            <person name="Breitwieser F.P."/>
            <person name="Buerckstuemmer T."/>
            <person name="Bennett K.L."/>
            <person name="Superti-Furga G."/>
            <person name="Colinge J."/>
        </authorList>
    </citation>
    <scope>IDENTIFICATION BY MASS SPECTROMETRY [LARGE SCALE ANALYSIS]</scope>
</reference>
<reference key="6">
    <citation type="journal article" date="2012" name="Cell">
        <title>Hikeshi, a nuclear import carrier for hsp70s, protects cells from heat shock-induced nuclear damage.</title>
        <authorList>
            <person name="Kose S."/>
            <person name="Furuta M."/>
            <person name="Imamoto N."/>
        </authorList>
    </citation>
    <scope>FUNCTION</scope>
    <scope>IDENTIFICATION BY MASS SPECTROMETRY</scope>
    <scope>SUBCELLULAR LOCATION</scope>
    <scope>INTERACTION WITH NUP62; NUP153 AND HSP70 PROTEINS</scope>
    <scope>INDUCTION</scope>
</reference>
<reference key="7">
    <citation type="journal article" date="2012" name="Proc. Natl. Acad. Sci. U.S.A.">
        <title>N-terminal acetylome analyses and functional insights of the N-terminal acetyltransferase NatB.</title>
        <authorList>
            <person name="Van Damme P."/>
            <person name="Lasa M."/>
            <person name="Polevoda B."/>
            <person name="Gazquez C."/>
            <person name="Elosegui-Artola A."/>
            <person name="Kim D.S."/>
            <person name="De Juan-Pardo E."/>
            <person name="Demeyer K."/>
            <person name="Hole K."/>
            <person name="Larrea E."/>
            <person name="Timmerman E."/>
            <person name="Prieto J."/>
            <person name="Arnesen T."/>
            <person name="Sherman F."/>
            <person name="Gevaert K."/>
            <person name="Aldabe R."/>
        </authorList>
    </citation>
    <scope>IDENTIFICATION BY MASS SPECTROMETRY [LARGE SCALE ANALYSIS]</scope>
</reference>
<reference evidence="9 10" key="8">
    <citation type="journal article" date="2015" name="Acta Crystallogr. D">
        <title>Structural and functional analysis of Hikeshi, a new nuclear transport receptor of Hsp70s.</title>
        <authorList>
            <person name="Song J."/>
            <person name="Kose S."/>
            <person name="Watanabe A."/>
            <person name="Son S.Y."/>
            <person name="Choi S."/>
            <person name="Hong H."/>
            <person name="Yamashita E."/>
            <person name="Park I.Y."/>
            <person name="Imamoto N."/>
            <person name="Lee S.J."/>
        </authorList>
    </citation>
    <scope>X-RAY CRYSTALLOGRAPHY (1.88 ANGSTROMS) OF HOMODIMER</scope>
    <scope>FUNCTION</scope>
    <scope>MUTAGENESIS OF VAL-18; VAL-24; TYR-55; LYS-77; PHE-97; 132-VAL--VAL-135 AND PHE-141</scope>
    <scope>INTERACTION WITH HSPA8</scope>
    <scope>REGION</scope>
    <scope>SUBUNIT</scope>
</reference>
<reference key="9">
    <citation type="journal article" date="2016" name="J. Med. Genet.">
        <title>Leukoencephalopathy and early death associated with an Ashkenazi-Jewish founder mutation in the Hikeshi gene.</title>
        <authorList>
            <person name="Edvardson S."/>
            <person name="Kose S."/>
            <person name="Jalas C."/>
            <person name="Fattal-Valevski A."/>
            <person name="Watanabe A."/>
            <person name="Ogawa Y."/>
            <person name="Mamada H."/>
            <person name="Fedick A.M."/>
            <person name="Ben-Shachar S."/>
            <person name="Treff N.R."/>
            <person name="Shaag A."/>
            <person name="Bale S."/>
            <person name="Gaertner J."/>
            <person name="Imamoto N."/>
            <person name="Elpeleg O."/>
        </authorList>
    </citation>
    <scope>INVOLVEMENT IN HLD13</scope>
    <scope>VARIANT HLD13 LEU-54</scope>
</reference>
<dbReference type="EMBL" id="AF151082">
    <property type="protein sequence ID" value="AAF36168.1"/>
    <property type="status" value="ALT_FRAME"/>
    <property type="molecule type" value="mRNA"/>
</dbReference>
<dbReference type="EMBL" id="AF161487">
    <property type="protein sequence ID" value="AAF29102.1"/>
    <property type="status" value="ALT_FRAME"/>
    <property type="molecule type" value="mRNA"/>
</dbReference>
<dbReference type="EMBL" id="AF161527">
    <property type="protein sequence ID" value="AAF29142.1"/>
    <property type="status" value="ALT_FRAME"/>
    <property type="molecule type" value="mRNA"/>
</dbReference>
<dbReference type="EMBL" id="AK001447">
    <property type="protein sequence ID" value="BAA91698.1"/>
    <property type="molecule type" value="mRNA"/>
</dbReference>
<dbReference type="EMBL" id="AK223198">
    <property type="protein sequence ID" value="BAD96918.1"/>
    <property type="molecule type" value="mRNA"/>
</dbReference>
<dbReference type="EMBL" id="BC001677">
    <property type="protein sequence ID" value="AAH01677.1"/>
    <property type="molecule type" value="mRNA"/>
</dbReference>
<dbReference type="EMBL" id="BC006476">
    <property type="protein sequence ID" value="AAH06476.1"/>
    <property type="molecule type" value="mRNA"/>
</dbReference>
<dbReference type="EMBL" id="BC015991">
    <property type="protein sequence ID" value="AAH15991.1"/>
    <property type="molecule type" value="mRNA"/>
</dbReference>
<dbReference type="EMBL" id="BC018080">
    <property type="protein sequence ID" value="AAH18080.1"/>
    <property type="molecule type" value="mRNA"/>
</dbReference>
<dbReference type="EMBL" id="BC021621">
    <property type="protein sequence ID" value="AAH21621.1"/>
    <property type="molecule type" value="mRNA"/>
</dbReference>
<dbReference type="CCDS" id="CCDS8275.1"/>
<dbReference type="RefSeq" id="NP_057485.2">
    <property type="nucleotide sequence ID" value="NM_016401.3"/>
</dbReference>
<dbReference type="PDB" id="3WVZ">
    <property type="method" value="X-ray"/>
    <property type="resolution" value="1.88 A"/>
    <property type="chains" value="A/B=1-197"/>
</dbReference>
<dbReference type="PDB" id="3WW0">
    <property type="method" value="X-ray"/>
    <property type="resolution" value="2.50 A"/>
    <property type="chains" value="A/B=1-197"/>
</dbReference>
<dbReference type="PDBsum" id="3WVZ"/>
<dbReference type="PDBsum" id="3WW0"/>
<dbReference type="SMR" id="Q53FT3"/>
<dbReference type="BioGRID" id="119574">
    <property type="interactions" value="20"/>
</dbReference>
<dbReference type="FunCoup" id="Q53FT3">
    <property type="interactions" value="3805"/>
</dbReference>
<dbReference type="IntAct" id="Q53FT3">
    <property type="interactions" value="18"/>
</dbReference>
<dbReference type="MINT" id="Q53FT3"/>
<dbReference type="STRING" id="9606.ENSP00000278483"/>
<dbReference type="iPTMnet" id="Q53FT3"/>
<dbReference type="PhosphoSitePlus" id="Q53FT3"/>
<dbReference type="BioMuta" id="HIKESHI"/>
<dbReference type="DMDM" id="110278911"/>
<dbReference type="jPOST" id="Q53FT3"/>
<dbReference type="MassIVE" id="Q53FT3"/>
<dbReference type="PaxDb" id="9606-ENSP00000278483"/>
<dbReference type="PeptideAtlas" id="Q53FT3"/>
<dbReference type="ProteomicsDB" id="62468"/>
<dbReference type="Pumba" id="Q53FT3"/>
<dbReference type="TopDownProteomics" id="Q53FT3"/>
<dbReference type="Antibodypedia" id="31443">
    <property type="antibodies" value="165 antibodies from 24 providers"/>
</dbReference>
<dbReference type="DNASU" id="51501"/>
<dbReference type="Ensembl" id="ENST00000278483.8">
    <property type="protein sequence ID" value="ENSP00000278483.3"/>
    <property type="gene ID" value="ENSG00000149196.17"/>
</dbReference>
<dbReference type="GeneID" id="51501"/>
<dbReference type="KEGG" id="hsa:51501"/>
<dbReference type="MANE-Select" id="ENST00000278483.8">
    <property type="protein sequence ID" value="ENSP00000278483.3"/>
    <property type="RefSeq nucleotide sequence ID" value="NM_016401.4"/>
    <property type="RefSeq protein sequence ID" value="NP_057485.2"/>
</dbReference>
<dbReference type="UCSC" id="uc001pbu.4">
    <property type="organism name" value="human"/>
</dbReference>
<dbReference type="AGR" id="HGNC:26938"/>
<dbReference type="CTD" id="51501"/>
<dbReference type="DisGeNET" id="51501"/>
<dbReference type="GeneCards" id="HIKESHI"/>
<dbReference type="HGNC" id="HGNC:26938">
    <property type="gene designation" value="HIKESHI"/>
</dbReference>
<dbReference type="HPA" id="ENSG00000149196">
    <property type="expression patterns" value="Low tissue specificity"/>
</dbReference>
<dbReference type="MalaCards" id="HIKESHI"/>
<dbReference type="MIM" id="614908">
    <property type="type" value="gene"/>
</dbReference>
<dbReference type="MIM" id="616881">
    <property type="type" value="phenotype"/>
</dbReference>
<dbReference type="neXtProt" id="NX_Q53FT3"/>
<dbReference type="OpenTargets" id="ENSG00000149196"/>
<dbReference type="Orphanet" id="495844">
    <property type="disease" value="C11ORF73-related autosomal recessive hypomyelinating leukodystrophy"/>
</dbReference>
<dbReference type="PharmGKB" id="PA144596492"/>
<dbReference type="VEuPathDB" id="HostDB:ENSG00000149196"/>
<dbReference type="eggNOG" id="KOG4067">
    <property type="taxonomic scope" value="Eukaryota"/>
</dbReference>
<dbReference type="GeneTree" id="ENSGT00390000004056"/>
<dbReference type="HOGENOM" id="CLU_084839_2_0_1"/>
<dbReference type="InParanoid" id="Q53FT3"/>
<dbReference type="OMA" id="WWAKFER"/>
<dbReference type="OrthoDB" id="10248398at2759"/>
<dbReference type="PAN-GO" id="Q53FT3">
    <property type="GO annotations" value="5 GO annotations based on evolutionary models"/>
</dbReference>
<dbReference type="PhylomeDB" id="Q53FT3"/>
<dbReference type="TreeFam" id="TF313222"/>
<dbReference type="PathwayCommons" id="Q53FT3"/>
<dbReference type="Reactome" id="R-HSA-3371453">
    <property type="pathway name" value="Regulation of HSF1-mediated heat shock response"/>
</dbReference>
<dbReference type="SignaLink" id="Q53FT3"/>
<dbReference type="BioGRID-ORCS" id="51501">
    <property type="hits" value="130 hits in 1112 CRISPR screens"/>
</dbReference>
<dbReference type="ChiTaRS" id="HIKESHI">
    <property type="organism name" value="human"/>
</dbReference>
<dbReference type="EvolutionaryTrace" id="Q53FT3"/>
<dbReference type="GeneWiki" id="C11orf73"/>
<dbReference type="GenomeRNAi" id="51501"/>
<dbReference type="Pharos" id="Q53FT3">
    <property type="development level" value="Tbio"/>
</dbReference>
<dbReference type="PRO" id="PR:Q53FT3"/>
<dbReference type="Proteomes" id="UP000005640">
    <property type="component" value="Chromosome 11"/>
</dbReference>
<dbReference type="RNAct" id="Q53FT3">
    <property type="molecule type" value="protein"/>
</dbReference>
<dbReference type="Bgee" id="ENSG00000149196">
    <property type="expression patterns" value="Expressed in left ventricle myocardium and 185 other cell types or tissues"/>
</dbReference>
<dbReference type="ExpressionAtlas" id="Q53FT3">
    <property type="expression patterns" value="baseline and differential"/>
</dbReference>
<dbReference type="GO" id="GO:0005829">
    <property type="term" value="C:cytosol"/>
    <property type="evidence" value="ECO:0000314"/>
    <property type="project" value="UniProtKB"/>
</dbReference>
<dbReference type="GO" id="GO:0016604">
    <property type="term" value="C:nuclear body"/>
    <property type="evidence" value="ECO:0000314"/>
    <property type="project" value="HPA"/>
</dbReference>
<dbReference type="GO" id="GO:0016607">
    <property type="term" value="C:nuclear speck"/>
    <property type="evidence" value="ECO:0000314"/>
    <property type="project" value="HPA"/>
</dbReference>
<dbReference type="GO" id="GO:0005654">
    <property type="term" value="C:nucleoplasm"/>
    <property type="evidence" value="ECO:0000314"/>
    <property type="project" value="HPA"/>
</dbReference>
<dbReference type="GO" id="GO:0005634">
    <property type="term" value="C:nucleus"/>
    <property type="evidence" value="ECO:0000314"/>
    <property type="project" value="UniProtKB"/>
</dbReference>
<dbReference type="GO" id="GO:0030544">
    <property type="term" value="F:Hsp70 protein binding"/>
    <property type="evidence" value="ECO:0000314"/>
    <property type="project" value="UniProtKB"/>
</dbReference>
<dbReference type="GO" id="GO:0061608">
    <property type="term" value="F:nuclear import signal receptor activity"/>
    <property type="evidence" value="ECO:0000314"/>
    <property type="project" value="GO_Central"/>
</dbReference>
<dbReference type="GO" id="GO:0034605">
    <property type="term" value="P:cellular response to heat"/>
    <property type="evidence" value="ECO:0000314"/>
    <property type="project" value="UniProtKB"/>
</dbReference>
<dbReference type="GO" id="GO:0007030">
    <property type="term" value="P:Golgi organization"/>
    <property type="evidence" value="ECO:0007669"/>
    <property type="project" value="Ensembl"/>
</dbReference>
<dbReference type="GO" id="GO:0030324">
    <property type="term" value="P:lung development"/>
    <property type="evidence" value="ECO:0007669"/>
    <property type="project" value="Ensembl"/>
</dbReference>
<dbReference type="GO" id="GO:0006606">
    <property type="term" value="P:protein import into nucleus"/>
    <property type="evidence" value="ECO:0000314"/>
    <property type="project" value="UniProtKB"/>
</dbReference>
<dbReference type="GO" id="GO:0015031">
    <property type="term" value="P:protein transport"/>
    <property type="evidence" value="ECO:0000314"/>
    <property type="project" value="UniProtKB"/>
</dbReference>
<dbReference type="DisProt" id="DP02719"/>
<dbReference type="InterPro" id="IPR048364">
    <property type="entry name" value="Hikeshi-like_C"/>
</dbReference>
<dbReference type="InterPro" id="IPR008493">
    <property type="entry name" value="Hikeshi-like_N"/>
</dbReference>
<dbReference type="InterPro" id="IPR031318">
    <property type="entry name" value="OPI10"/>
</dbReference>
<dbReference type="PANTHER" id="PTHR12925">
    <property type="entry name" value="HIKESHI FAMILY MEMBER"/>
    <property type="match status" value="1"/>
</dbReference>
<dbReference type="PANTHER" id="PTHR12925:SF0">
    <property type="entry name" value="PROTEIN HIKESHI"/>
    <property type="match status" value="1"/>
</dbReference>
<dbReference type="Pfam" id="PF21057">
    <property type="entry name" value="Hikeshi-like_C"/>
    <property type="match status" value="1"/>
</dbReference>
<dbReference type="Pfam" id="PF05603">
    <property type="entry name" value="Hikeshi-like_N"/>
    <property type="match status" value="1"/>
</dbReference>
<feature type="chain" id="PRO_0000245262" description="Protein Hikeshi">
    <location>
        <begin position="1"/>
        <end position="197"/>
    </location>
</feature>
<feature type="region of interest" description="Required for F-X-F-G repeats-nucleoporins recognition and nuclear import" evidence="3">
    <location>
        <begin position="18"/>
        <end position="55"/>
    </location>
</feature>
<feature type="region of interest" description="Flexible linker region involved in nuclear import of HSP70 proteins" evidence="3">
    <location>
        <begin position="124"/>
        <end position="134"/>
    </location>
</feature>
<feature type="sequence variant" id="VAR_026968" description="In dbSNP:rs11539213." evidence="2">
    <original>P</original>
    <variation>A</variation>
    <location>
        <position position="47"/>
    </location>
</feature>
<feature type="sequence variant" id="VAR_076411" description="In HLD13; dbSNP:rs202003795." evidence="5">
    <original>V</original>
    <variation>L</variation>
    <location>
        <position position="54"/>
    </location>
</feature>
<feature type="mutagenesis site" description="Impairs the nuclear migrating activity." evidence="4">
    <original>V</original>
    <variation>A</variation>
    <location>
        <position position="18"/>
    </location>
</feature>
<feature type="mutagenesis site" description="Reduces the nuclear migrating activity." evidence="4">
    <original>V</original>
    <variation>A</variation>
    <location>
        <position position="24"/>
    </location>
</feature>
<feature type="mutagenesis site" description="Reduces the nuclear migrating activity." evidence="4">
    <original>Y</original>
    <variation>A</variation>
    <location>
        <position position="55"/>
    </location>
</feature>
<feature type="mutagenesis site" description="Decreases nuclear import activity of HSPA8. Does not affect the dimer formation. Impairs binding to HSPA8." evidence="4">
    <original>K</original>
    <variation>A</variation>
    <location>
        <position position="77"/>
    </location>
</feature>
<feature type="mutagenesis site" description="Increases the nuclear migrating activity." evidence="4">
    <original>F</original>
    <variation>A</variation>
    <location>
        <position position="97"/>
    </location>
</feature>
<feature type="mutagenesis site" description="Decreases nuclear import activity of HSPA8. Does not affect the dimer formation. Markedly decreases binding to HSPA8." evidence="4">
    <location>
        <begin position="132"/>
        <end position="135"/>
    </location>
</feature>
<feature type="mutagenesis site" description="Decreases nuclear import activity of HSPA8. Does not affect the dimer formation. Decreases binding to HSPA8." evidence="4">
    <original>F</original>
    <variation>A</variation>
    <location>
        <position position="141"/>
    </location>
</feature>
<feature type="sequence conflict" description="In Ref. 1; AAF29102 and 3; BAD96918." evidence="6" ref="1 3">
    <original>F</original>
    <variation>L</variation>
    <location>
        <position position="82"/>
    </location>
</feature>
<feature type="strand" evidence="11">
    <location>
        <begin position="2"/>
        <end position="6"/>
    </location>
</feature>
<feature type="strand" evidence="11">
    <location>
        <begin position="16"/>
        <end position="19"/>
    </location>
</feature>
<feature type="strand" evidence="11">
    <location>
        <begin position="22"/>
        <end position="29"/>
    </location>
</feature>
<feature type="helix" evidence="11">
    <location>
        <begin position="30"/>
        <end position="32"/>
    </location>
</feature>
<feature type="strand" evidence="11">
    <location>
        <begin position="34"/>
        <end position="40"/>
    </location>
</feature>
<feature type="strand" evidence="11">
    <location>
        <begin position="42"/>
        <end position="44"/>
    </location>
</feature>
<feature type="strand" evidence="11">
    <location>
        <begin position="50"/>
        <end position="57"/>
    </location>
</feature>
<feature type="strand" evidence="11">
    <location>
        <begin position="68"/>
        <end position="73"/>
    </location>
</feature>
<feature type="strand" evidence="11">
    <location>
        <begin position="75"/>
        <end position="77"/>
    </location>
</feature>
<feature type="strand" evidence="11">
    <location>
        <begin position="79"/>
        <end position="83"/>
    </location>
</feature>
<feature type="strand" evidence="11">
    <location>
        <begin position="108"/>
        <end position="117"/>
    </location>
</feature>
<feature type="helix" evidence="11">
    <location>
        <begin position="118"/>
        <end position="121"/>
    </location>
</feature>
<feature type="helix" evidence="11">
    <location>
        <begin position="137"/>
        <end position="154"/>
    </location>
</feature>
<feature type="helix" evidence="11">
    <location>
        <begin position="160"/>
        <end position="162"/>
    </location>
</feature>
<feature type="strand" evidence="11">
    <location>
        <begin position="171"/>
        <end position="173"/>
    </location>
</feature>
<feature type="helix" evidence="11">
    <location>
        <begin position="174"/>
        <end position="188"/>
    </location>
</feature>
<feature type="turn" evidence="12">
    <location>
        <begin position="192"/>
        <end position="195"/>
    </location>
</feature>
<protein>
    <recommendedName>
        <fullName evidence="6">Protein Hikeshi</fullName>
    </recommendedName>
</protein>